<evidence type="ECO:0000250" key="1"/>
<evidence type="ECO:0000255" key="2"/>
<evidence type="ECO:0000255" key="3">
    <source>
        <dbReference type="PROSITE-ProRule" id="PRU00090"/>
    </source>
</evidence>
<evidence type="ECO:0000255" key="4">
    <source>
        <dbReference type="PROSITE-ProRule" id="PRU00295"/>
    </source>
</evidence>
<evidence type="ECO:0000269" key="5">
    <source>
    </source>
</evidence>
<evidence type="ECO:0000269" key="6">
    <source>
    </source>
</evidence>
<evidence type="ECO:0000269" key="7">
    <source>
    </source>
</evidence>
<evidence type="ECO:0000269" key="8">
    <source>
    </source>
</evidence>
<evidence type="ECO:0000305" key="9"/>
<protein>
    <recommendedName>
        <fullName>Secreted frizzled-related protein 5</fullName>
        <shortName>sFRP-5</shortName>
    </recommendedName>
    <alternativeName>
        <fullName>Frizzled-related protein 1b</fullName>
        <shortName>FRP-1b</shortName>
    </alternativeName>
    <alternativeName>
        <fullName>Secreted apoptosis-related protein 3</fullName>
        <shortName>SARP-3</shortName>
    </alternativeName>
</protein>
<name>SFRP5_HUMAN</name>
<accession>Q5T4F7</accession>
<accession>O14780</accession>
<accession>Q86TH7</accession>
<keyword id="KW-0217">Developmental protein</keyword>
<keyword id="KW-0221">Differentiation</keyword>
<keyword id="KW-1015">Disulfide bond</keyword>
<keyword id="KW-1267">Proteomics identification</keyword>
<keyword id="KW-1185">Reference proteome</keyword>
<keyword id="KW-0964">Secreted</keyword>
<keyword id="KW-0732">Signal</keyword>
<keyword id="KW-0879">Wnt signaling pathway</keyword>
<organism>
    <name type="scientific">Homo sapiens</name>
    <name type="common">Human</name>
    <dbReference type="NCBI Taxonomy" id="9606"/>
    <lineage>
        <taxon>Eukaryota</taxon>
        <taxon>Metazoa</taxon>
        <taxon>Chordata</taxon>
        <taxon>Craniata</taxon>
        <taxon>Vertebrata</taxon>
        <taxon>Euteleostomi</taxon>
        <taxon>Mammalia</taxon>
        <taxon>Eutheria</taxon>
        <taxon>Euarchontoglires</taxon>
        <taxon>Primates</taxon>
        <taxon>Haplorrhini</taxon>
        <taxon>Catarrhini</taxon>
        <taxon>Hominidae</taxon>
        <taxon>Homo</taxon>
    </lineage>
</organism>
<dbReference type="EMBL" id="AF017988">
    <property type="protein sequence ID" value="AAB70794.1"/>
    <property type="molecule type" value="mRNA"/>
</dbReference>
<dbReference type="EMBL" id="AF117758">
    <property type="protein sequence ID" value="AAD25052.1"/>
    <property type="molecule type" value="mRNA"/>
</dbReference>
<dbReference type="EMBL" id="CR596705">
    <property type="status" value="NOT_ANNOTATED_CDS"/>
    <property type="molecule type" value="mRNA"/>
</dbReference>
<dbReference type="EMBL" id="AL358938">
    <property type="status" value="NOT_ANNOTATED_CDS"/>
    <property type="molecule type" value="Genomic_DNA"/>
</dbReference>
<dbReference type="EMBL" id="BC050435">
    <property type="protein sequence ID" value="AAH50435.2"/>
    <property type="molecule type" value="mRNA"/>
</dbReference>
<dbReference type="CCDS" id="CCDS7472.1"/>
<dbReference type="PIR" id="JE0175">
    <property type="entry name" value="JE0175"/>
</dbReference>
<dbReference type="RefSeq" id="NP_003006.2">
    <property type="nucleotide sequence ID" value="NM_003015.3"/>
</dbReference>
<dbReference type="SMR" id="Q5T4F7"/>
<dbReference type="BioGRID" id="112323">
    <property type="interactions" value="4"/>
</dbReference>
<dbReference type="FunCoup" id="Q5T4F7">
    <property type="interactions" value="321"/>
</dbReference>
<dbReference type="STRING" id="9606.ENSP00000266066"/>
<dbReference type="MEROPS" id="I93.002"/>
<dbReference type="iPTMnet" id="Q5T4F7"/>
<dbReference type="PhosphoSitePlus" id="Q5T4F7"/>
<dbReference type="BioMuta" id="SFRP5"/>
<dbReference type="DMDM" id="150421670"/>
<dbReference type="jPOST" id="Q5T4F7"/>
<dbReference type="MassIVE" id="Q5T4F7"/>
<dbReference type="PaxDb" id="9606-ENSP00000266066"/>
<dbReference type="PeptideAtlas" id="Q5T4F7"/>
<dbReference type="ProteomicsDB" id="64458"/>
<dbReference type="Antibodypedia" id="17373">
    <property type="antibodies" value="269 antibodies from 28 providers"/>
</dbReference>
<dbReference type="DNASU" id="6425"/>
<dbReference type="Ensembl" id="ENST00000266066.4">
    <property type="protein sequence ID" value="ENSP00000266066.3"/>
    <property type="gene ID" value="ENSG00000120057.5"/>
</dbReference>
<dbReference type="GeneID" id="6425"/>
<dbReference type="KEGG" id="hsa:6425"/>
<dbReference type="MANE-Select" id="ENST00000266066.4">
    <property type="protein sequence ID" value="ENSP00000266066.3"/>
    <property type="RefSeq nucleotide sequence ID" value="NM_003015.3"/>
    <property type="RefSeq protein sequence ID" value="NP_003006.2"/>
</dbReference>
<dbReference type="UCSC" id="uc001kor.5">
    <property type="organism name" value="human"/>
</dbReference>
<dbReference type="AGR" id="HGNC:10779"/>
<dbReference type="CTD" id="6425"/>
<dbReference type="DisGeNET" id="6425"/>
<dbReference type="GeneCards" id="SFRP5"/>
<dbReference type="HGNC" id="HGNC:10779">
    <property type="gene designation" value="SFRP5"/>
</dbReference>
<dbReference type="HPA" id="ENSG00000120057">
    <property type="expression patterns" value="Group enriched (choroid plexus, heart muscle, pancreas)"/>
</dbReference>
<dbReference type="MIM" id="604158">
    <property type="type" value="gene"/>
</dbReference>
<dbReference type="neXtProt" id="NX_Q5T4F7"/>
<dbReference type="OpenTargets" id="ENSG00000120057"/>
<dbReference type="PharmGKB" id="PA35695"/>
<dbReference type="VEuPathDB" id="HostDB:ENSG00000120057"/>
<dbReference type="eggNOG" id="KOG3577">
    <property type="taxonomic scope" value="Eukaryota"/>
</dbReference>
<dbReference type="GeneTree" id="ENSGT00940000160608"/>
<dbReference type="HOGENOM" id="CLU_054647_1_0_1"/>
<dbReference type="InParanoid" id="Q5T4F7"/>
<dbReference type="OMA" id="GGQHYDY"/>
<dbReference type="OrthoDB" id="5985572at2759"/>
<dbReference type="PAN-GO" id="Q5T4F7">
    <property type="GO annotations" value="5 GO annotations based on evolutionary models"/>
</dbReference>
<dbReference type="PhylomeDB" id="Q5T4F7"/>
<dbReference type="TreeFam" id="TF350133"/>
<dbReference type="PathwayCommons" id="Q5T4F7"/>
<dbReference type="BioGRID-ORCS" id="6425">
    <property type="hits" value="12 hits in 1144 CRISPR screens"/>
</dbReference>
<dbReference type="GeneWiki" id="SFRP5"/>
<dbReference type="GenomeRNAi" id="6425"/>
<dbReference type="Pharos" id="Q5T4F7">
    <property type="development level" value="Tbio"/>
</dbReference>
<dbReference type="PRO" id="PR:Q5T4F7"/>
<dbReference type="Proteomes" id="UP000005640">
    <property type="component" value="Chromosome 10"/>
</dbReference>
<dbReference type="RNAct" id="Q5T4F7">
    <property type="molecule type" value="protein"/>
</dbReference>
<dbReference type="Bgee" id="ENSG00000120057">
    <property type="expression patterns" value="Expressed in pigmented layer of retina and 153 other cell types or tissues"/>
</dbReference>
<dbReference type="GO" id="GO:0005615">
    <property type="term" value="C:extracellular space"/>
    <property type="evidence" value="ECO:0000318"/>
    <property type="project" value="GO_Central"/>
</dbReference>
<dbReference type="GO" id="GO:0017147">
    <property type="term" value="F:Wnt-protein binding"/>
    <property type="evidence" value="ECO:0000318"/>
    <property type="project" value="GO_Central"/>
</dbReference>
<dbReference type="GO" id="GO:0009653">
    <property type="term" value="P:anatomical structure morphogenesis"/>
    <property type="evidence" value="ECO:0000304"/>
    <property type="project" value="ProtInc"/>
</dbReference>
<dbReference type="GO" id="GO:0006915">
    <property type="term" value="P:apoptotic process"/>
    <property type="evidence" value="ECO:0000304"/>
    <property type="project" value="ProtInc"/>
</dbReference>
<dbReference type="GO" id="GO:0060070">
    <property type="term" value="P:canonical Wnt signaling pathway"/>
    <property type="evidence" value="ECO:0000318"/>
    <property type="project" value="GO_Central"/>
</dbReference>
<dbReference type="GO" id="GO:0030154">
    <property type="term" value="P:cell differentiation"/>
    <property type="evidence" value="ECO:0007669"/>
    <property type="project" value="UniProtKB-KW"/>
</dbReference>
<dbReference type="GO" id="GO:0048546">
    <property type="term" value="P:digestive tract morphogenesis"/>
    <property type="evidence" value="ECO:0000315"/>
    <property type="project" value="BHF-UCL"/>
</dbReference>
<dbReference type="GO" id="GO:0007163">
    <property type="term" value="P:establishment or maintenance of cell polarity"/>
    <property type="evidence" value="ECO:0000304"/>
    <property type="project" value="ProtInc"/>
</dbReference>
<dbReference type="GO" id="GO:0090090">
    <property type="term" value="P:negative regulation of canonical Wnt signaling pathway"/>
    <property type="evidence" value="ECO:0000315"/>
    <property type="project" value="BHF-UCL"/>
</dbReference>
<dbReference type="GO" id="GO:0008285">
    <property type="term" value="P:negative regulation of cell population proliferation"/>
    <property type="evidence" value="ECO:0000315"/>
    <property type="project" value="BHF-UCL"/>
</dbReference>
<dbReference type="GO" id="GO:2000051">
    <property type="term" value="P:negative regulation of non-canonical Wnt signaling pathway"/>
    <property type="evidence" value="ECO:0000315"/>
    <property type="project" value="BHF-UCL"/>
</dbReference>
<dbReference type="GO" id="GO:0051898">
    <property type="term" value="P:negative regulation of phosphatidylinositol 3-kinase/protein kinase B signal transduction"/>
    <property type="evidence" value="ECO:0000315"/>
    <property type="project" value="BHF-UCL"/>
</dbReference>
<dbReference type="GO" id="GO:0030178">
    <property type="term" value="P:negative regulation of Wnt signaling pathway"/>
    <property type="evidence" value="ECO:0000303"/>
    <property type="project" value="ParkinsonsUK-UCL"/>
</dbReference>
<dbReference type="GO" id="GO:0035567">
    <property type="term" value="P:non-canonical Wnt signaling pathway"/>
    <property type="evidence" value="ECO:0000318"/>
    <property type="project" value="GO_Central"/>
</dbReference>
<dbReference type="GO" id="GO:0006357">
    <property type="term" value="P:regulation of transcription by RNA polymerase II"/>
    <property type="evidence" value="ECO:0000315"/>
    <property type="project" value="BHF-UCL"/>
</dbReference>
<dbReference type="GO" id="GO:0007165">
    <property type="term" value="P:signal transduction"/>
    <property type="evidence" value="ECO:0000304"/>
    <property type="project" value="ProtInc"/>
</dbReference>
<dbReference type="GO" id="GO:0007601">
    <property type="term" value="P:visual perception"/>
    <property type="evidence" value="ECO:0000304"/>
    <property type="project" value="ProtInc"/>
</dbReference>
<dbReference type="CDD" id="cd07444">
    <property type="entry name" value="CRD_SFRP5"/>
    <property type="match status" value="1"/>
</dbReference>
<dbReference type="CDD" id="cd03580">
    <property type="entry name" value="NTR_Sfrp1_like"/>
    <property type="match status" value="1"/>
</dbReference>
<dbReference type="FunFam" id="1.10.2000.10:FF:000001">
    <property type="entry name" value="secreted frizzled-related protein 2"/>
    <property type="match status" value="1"/>
</dbReference>
<dbReference type="FunFam" id="2.40.50.120:FF:000014">
    <property type="entry name" value="Secreted frizzled-related protein 5"/>
    <property type="match status" value="1"/>
</dbReference>
<dbReference type="Gene3D" id="2.40.50.120">
    <property type="match status" value="1"/>
</dbReference>
<dbReference type="Gene3D" id="1.10.2000.10">
    <property type="entry name" value="Frizzled cysteine-rich domain"/>
    <property type="match status" value="1"/>
</dbReference>
<dbReference type="InterPro" id="IPR015526">
    <property type="entry name" value="Frizzled/SFRP"/>
</dbReference>
<dbReference type="InterPro" id="IPR020067">
    <property type="entry name" value="Frizzled_dom"/>
</dbReference>
<dbReference type="InterPro" id="IPR036790">
    <property type="entry name" value="Frizzled_dom_sf"/>
</dbReference>
<dbReference type="InterPro" id="IPR001134">
    <property type="entry name" value="Netrin_domain"/>
</dbReference>
<dbReference type="InterPro" id="IPR018933">
    <property type="entry name" value="Netrin_module_non-TIMP"/>
</dbReference>
<dbReference type="InterPro" id="IPR041761">
    <property type="entry name" value="SFRP5_CRD"/>
</dbReference>
<dbReference type="InterPro" id="IPR008993">
    <property type="entry name" value="TIMP-like_OB-fold"/>
</dbReference>
<dbReference type="PANTHER" id="PTHR11309">
    <property type="entry name" value="FRIZZLED"/>
    <property type="match status" value="1"/>
</dbReference>
<dbReference type="PANTHER" id="PTHR11309:SF46">
    <property type="entry name" value="SECRETED FRIZZLED-RELATED PROTEIN 5"/>
    <property type="match status" value="1"/>
</dbReference>
<dbReference type="Pfam" id="PF01392">
    <property type="entry name" value="Fz"/>
    <property type="match status" value="1"/>
</dbReference>
<dbReference type="Pfam" id="PF01759">
    <property type="entry name" value="NTR"/>
    <property type="match status" value="1"/>
</dbReference>
<dbReference type="SMART" id="SM00643">
    <property type="entry name" value="C345C"/>
    <property type="match status" value="1"/>
</dbReference>
<dbReference type="SMART" id="SM00063">
    <property type="entry name" value="FRI"/>
    <property type="match status" value="1"/>
</dbReference>
<dbReference type="SUPFAM" id="SSF63501">
    <property type="entry name" value="Frizzled cysteine-rich domain"/>
    <property type="match status" value="1"/>
</dbReference>
<dbReference type="SUPFAM" id="SSF50242">
    <property type="entry name" value="TIMP-like"/>
    <property type="match status" value="1"/>
</dbReference>
<dbReference type="PROSITE" id="PS50038">
    <property type="entry name" value="FZ"/>
    <property type="match status" value="1"/>
</dbReference>
<dbReference type="PROSITE" id="PS50189">
    <property type="entry name" value="NTR"/>
    <property type="match status" value="1"/>
</dbReference>
<reference key="1">
    <citation type="journal article" date="1997" name="Proc. Natl. Acad. Sci. U.S.A.">
        <title>SARPs: a family of secreted apoptosis-related proteins.</title>
        <authorList>
            <person name="Melkonyan H.S."/>
            <person name="Chang W.C."/>
            <person name="Shapiro J.P."/>
            <person name="Mahadevappa M."/>
            <person name="Fitzpatrick P.A."/>
            <person name="Kiefer M.C."/>
            <person name="Tomei L.D."/>
            <person name="Umansky S.R."/>
        </authorList>
    </citation>
    <scope>NUCLEOTIDE SEQUENCE [MRNA]</scope>
    <scope>VARIANT ALA-7</scope>
    <scope>TISSUE SPECIFICITY</scope>
    <source>
        <tissue>Pancreas</tissue>
    </source>
</reference>
<reference key="2">
    <citation type="journal article" date="1998" name="Biochem. Biophys. Res. Commun.">
        <title>Tissue restricted expression of two human Frzbs in preadipocytes and pancreas.</title>
        <authorList>
            <person name="Hu E."/>
            <person name="Zhu Y."/>
            <person name="Fredrickson T."/>
            <person name="Barnes M."/>
            <person name="Kelsell D."/>
            <person name="Beeley L."/>
            <person name="Brooks D."/>
        </authorList>
    </citation>
    <scope>NUCLEOTIDE SEQUENCE [MRNA]</scope>
    <scope>VARIANT ALA-7</scope>
    <scope>TISSUE SPECIFICITY</scope>
</reference>
<reference key="3">
    <citation type="journal article" date="1999" name="Hum. Mol. Genet.">
        <title>Cloning and characterization of a secreted frizzled-related protein that is expressed by the retinal pigment epithelium.</title>
        <authorList>
            <person name="Chang J.T."/>
            <person name="Esumi N."/>
            <person name="Moore K."/>
            <person name="Li Y."/>
            <person name="Zhang S."/>
            <person name="Chew C."/>
            <person name="Goodman B."/>
            <person name="Rattner A."/>
            <person name="Moody S."/>
            <person name="Stetten G."/>
            <person name="Campochiaro P.A."/>
            <person name="Zack D.J."/>
        </authorList>
    </citation>
    <scope>NUCLEOTIDE SEQUENCE [GENOMIC DNA / MRNA]</scope>
    <scope>VARIANT ALA-7</scope>
    <scope>TISSUE SPECIFICITY</scope>
    <source>
        <tissue>Retina</tissue>
    </source>
</reference>
<reference key="4">
    <citation type="submission" date="2004-07" db="EMBL/GenBank/DDBJ databases">
        <title>Full-length cDNA libraries and normalization.</title>
        <authorList>
            <person name="Li W.B."/>
            <person name="Gruber C."/>
            <person name="Jessee J."/>
            <person name="Polayes D."/>
        </authorList>
    </citation>
    <scope>NUCLEOTIDE SEQUENCE [LARGE SCALE MRNA]</scope>
    <source>
        <tissue>Fetal brain</tissue>
    </source>
</reference>
<reference key="5">
    <citation type="journal article" date="2004" name="Nature">
        <title>The DNA sequence and comparative analysis of human chromosome 10.</title>
        <authorList>
            <person name="Deloukas P."/>
            <person name="Earthrowl M.E."/>
            <person name="Grafham D.V."/>
            <person name="Rubenfield M."/>
            <person name="French L."/>
            <person name="Steward C.A."/>
            <person name="Sims S.K."/>
            <person name="Jones M.C."/>
            <person name="Searle S."/>
            <person name="Scott C."/>
            <person name="Howe K."/>
            <person name="Hunt S.E."/>
            <person name="Andrews T.D."/>
            <person name="Gilbert J.G.R."/>
            <person name="Swarbreck D."/>
            <person name="Ashurst J.L."/>
            <person name="Taylor A."/>
            <person name="Battles J."/>
            <person name="Bird C.P."/>
            <person name="Ainscough R."/>
            <person name="Almeida J.P."/>
            <person name="Ashwell R.I.S."/>
            <person name="Ambrose K.D."/>
            <person name="Babbage A.K."/>
            <person name="Bagguley C.L."/>
            <person name="Bailey J."/>
            <person name="Banerjee R."/>
            <person name="Bates K."/>
            <person name="Beasley H."/>
            <person name="Bray-Allen S."/>
            <person name="Brown A.J."/>
            <person name="Brown J.Y."/>
            <person name="Burford D.C."/>
            <person name="Burrill W."/>
            <person name="Burton J."/>
            <person name="Cahill P."/>
            <person name="Camire D."/>
            <person name="Carter N.P."/>
            <person name="Chapman J.C."/>
            <person name="Clark S.Y."/>
            <person name="Clarke G."/>
            <person name="Clee C.M."/>
            <person name="Clegg S."/>
            <person name="Corby N."/>
            <person name="Coulson A."/>
            <person name="Dhami P."/>
            <person name="Dutta I."/>
            <person name="Dunn M."/>
            <person name="Faulkner L."/>
            <person name="Frankish A."/>
            <person name="Frankland J.A."/>
            <person name="Garner P."/>
            <person name="Garnett J."/>
            <person name="Gribble S."/>
            <person name="Griffiths C."/>
            <person name="Grocock R."/>
            <person name="Gustafson E."/>
            <person name="Hammond S."/>
            <person name="Harley J.L."/>
            <person name="Hart E."/>
            <person name="Heath P.D."/>
            <person name="Ho T.P."/>
            <person name="Hopkins B."/>
            <person name="Horne J."/>
            <person name="Howden P.J."/>
            <person name="Huckle E."/>
            <person name="Hynds C."/>
            <person name="Johnson C."/>
            <person name="Johnson D."/>
            <person name="Kana A."/>
            <person name="Kay M."/>
            <person name="Kimberley A.M."/>
            <person name="Kershaw J.K."/>
            <person name="Kokkinaki M."/>
            <person name="Laird G.K."/>
            <person name="Lawlor S."/>
            <person name="Lee H.M."/>
            <person name="Leongamornlert D.A."/>
            <person name="Laird G."/>
            <person name="Lloyd C."/>
            <person name="Lloyd D.M."/>
            <person name="Loveland J."/>
            <person name="Lovell J."/>
            <person name="McLaren S."/>
            <person name="McLay K.E."/>
            <person name="McMurray A."/>
            <person name="Mashreghi-Mohammadi M."/>
            <person name="Matthews L."/>
            <person name="Milne S."/>
            <person name="Nickerson T."/>
            <person name="Nguyen M."/>
            <person name="Overton-Larty E."/>
            <person name="Palmer S.A."/>
            <person name="Pearce A.V."/>
            <person name="Peck A.I."/>
            <person name="Pelan S."/>
            <person name="Phillimore B."/>
            <person name="Porter K."/>
            <person name="Rice C.M."/>
            <person name="Rogosin A."/>
            <person name="Ross M.T."/>
            <person name="Sarafidou T."/>
            <person name="Sehra H.K."/>
            <person name="Shownkeen R."/>
            <person name="Skuce C.D."/>
            <person name="Smith M."/>
            <person name="Standring L."/>
            <person name="Sycamore N."/>
            <person name="Tester J."/>
            <person name="Thorpe A."/>
            <person name="Torcasso W."/>
            <person name="Tracey A."/>
            <person name="Tromans A."/>
            <person name="Tsolas J."/>
            <person name="Wall M."/>
            <person name="Walsh J."/>
            <person name="Wang H."/>
            <person name="Weinstock K."/>
            <person name="West A.P."/>
            <person name="Willey D.L."/>
            <person name="Whitehead S.L."/>
            <person name="Wilming L."/>
            <person name="Wray P.W."/>
            <person name="Young L."/>
            <person name="Chen Y."/>
            <person name="Lovering R.C."/>
            <person name="Moschonas N.K."/>
            <person name="Siebert R."/>
            <person name="Fechtel K."/>
            <person name="Bentley D."/>
            <person name="Durbin R.M."/>
            <person name="Hubbard T."/>
            <person name="Doucette-Stamm L."/>
            <person name="Beck S."/>
            <person name="Smith D.R."/>
            <person name="Rogers J."/>
        </authorList>
    </citation>
    <scope>NUCLEOTIDE SEQUENCE [LARGE SCALE GENOMIC DNA]</scope>
</reference>
<reference key="6">
    <citation type="journal article" date="2004" name="Genome Res.">
        <title>The status, quality, and expansion of the NIH full-length cDNA project: the Mammalian Gene Collection (MGC).</title>
        <authorList>
            <consortium name="The MGC Project Team"/>
        </authorList>
    </citation>
    <scope>NUCLEOTIDE SEQUENCE [LARGE SCALE MRNA]</scope>
    <scope>VARIANT ALA-7</scope>
    <source>
        <tissue>PNS</tissue>
    </source>
</reference>
<gene>
    <name type="primary">SFRP5</name>
    <name type="synonym">FRP1B</name>
    <name type="synonym">SARP3</name>
</gene>
<comment type="function">
    <text>Soluble frizzled-related proteins (sFRPS) function as modulators of Wnt signaling through direct interaction with Wnts. They have a role in regulating cell growth and differentiation in specific cell types. SFRP5 may be involved in determining the polarity of photoreceptor, and perhaps, other cells in the retina.</text>
</comment>
<comment type="subcellular location">
    <subcellularLocation>
        <location evidence="1">Secreted</location>
    </subcellularLocation>
</comment>
<comment type="tissue specificity">
    <text evidence="5 7 8">Highly expressed in the retinal pigment epithelium (RPE) and pancreas. Weak expression in heart, liver and muscle.</text>
</comment>
<comment type="domain">
    <text evidence="1">The FZ domain is involved in binding with Wnt ligands.</text>
</comment>
<comment type="similarity">
    <text evidence="9">Belongs to the secreted frizzled-related protein (sFRP) family.</text>
</comment>
<proteinExistence type="evidence at protein level"/>
<feature type="signal peptide" evidence="2">
    <location>
        <begin position="1"/>
        <end position="29"/>
    </location>
</feature>
<feature type="chain" id="PRO_0000032555" description="Secreted frizzled-related protein 5">
    <location>
        <begin position="30"/>
        <end position="317"/>
    </location>
</feature>
<feature type="domain" description="FZ" evidence="3">
    <location>
        <begin position="48"/>
        <end position="165"/>
    </location>
</feature>
<feature type="domain" description="NTR" evidence="4">
    <location>
        <begin position="181"/>
        <end position="303"/>
    </location>
</feature>
<feature type="disulfide bond" evidence="1">
    <location>
        <begin position="53"/>
        <end position="116"/>
    </location>
</feature>
<feature type="disulfide bond" evidence="1">
    <location>
        <begin position="63"/>
        <end position="109"/>
    </location>
</feature>
<feature type="disulfide bond" evidence="1">
    <location>
        <begin position="100"/>
        <end position="135"/>
    </location>
</feature>
<feature type="disulfide bond" evidence="1">
    <location>
        <begin position="124"/>
        <end position="162"/>
    </location>
</feature>
<feature type="disulfide bond" evidence="1">
    <location>
        <begin position="128"/>
        <end position="152"/>
    </location>
</feature>
<feature type="disulfide bond" evidence="1">
    <location>
        <begin position="181"/>
        <end position="253"/>
    </location>
</feature>
<feature type="disulfide bond" evidence="1">
    <location>
        <begin position="184"/>
        <end position="255"/>
    </location>
</feature>
<feature type="disulfide bond" evidence="1">
    <location>
        <begin position="198"/>
        <end position="303"/>
    </location>
</feature>
<feature type="sequence variant" id="VAR_021412" description="In dbSNP:rs11815012." evidence="5 6 7 8">
    <original>G</original>
    <variation>A</variation>
    <location>
        <position position="7"/>
    </location>
</feature>
<feature type="sequence conflict" description="In Ref. 2." evidence="9" ref="2">
    <original>D</original>
    <variation>H</variation>
    <location>
        <position position="33"/>
    </location>
</feature>
<sequence>MRAAAAGGGVRTAALALLLGALHWAPARCEEYDYYGWQAEPLHGRSYSKPPQCLDIPADLPLCHTVGYKRMRLPNLLEHESLAEVKQQASSWLPLLAKRCHSDTQVFLCSLFAPVCLDRPIYPCRSLCEAVRAGCAPLMEAYGFPWPEMLHCHKFPLDNDLCIAVQFGHLPATAPPVTKICAQCEMEHSADGLMEQMCSSDFVVKMRIKEIKIENGDRKLIGAQKKKKLLKPGPLKRKDTKRLVLHMKNGAGCPCPQLDSLAGSFLVMGRKVDGQLLLMAVYRWDKKNKEMKFAVKFMFSYPCSLYYPFFYGAAEPH</sequence>